<gene>
    <name type="primary">atpA</name>
    <name type="ordered locus">CPn_0088</name>
    <name type="ordered locus">CP_0686</name>
    <name type="ordered locus">CpB0088</name>
</gene>
<comment type="function">
    <text evidence="1">Produces ATP from ADP in the presence of a proton gradient across the membrane. The V-type alpha chain is a catalytic subunit (By similarity).</text>
</comment>
<comment type="catalytic activity">
    <reaction>
        <text>ATP + H2O + 4 H(+)(in) = ADP + phosphate + 5 H(+)(out)</text>
        <dbReference type="Rhea" id="RHEA:57720"/>
        <dbReference type="ChEBI" id="CHEBI:15377"/>
        <dbReference type="ChEBI" id="CHEBI:15378"/>
        <dbReference type="ChEBI" id="CHEBI:30616"/>
        <dbReference type="ChEBI" id="CHEBI:43474"/>
        <dbReference type="ChEBI" id="CHEBI:456216"/>
        <dbReference type="EC" id="7.1.2.2"/>
    </reaction>
</comment>
<comment type="similarity">
    <text evidence="3">Belongs to the ATPase alpha/beta chains family.</text>
</comment>
<evidence type="ECO:0000250" key="1"/>
<evidence type="ECO:0000255" key="2"/>
<evidence type="ECO:0000305" key="3"/>
<feature type="chain" id="PRO_0000144612" description="V-type ATP synthase alpha chain">
    <location>
        <begin position="1"/>
        <end position="591"/>
    </location>
</feature>
<feature type="binding site" evidence="2">
    <location>
        <begin position="242"/>
        <end position="249"/>
    </location>
    <ligand>
        <name>ATP</name>
        <dbReference type="ChEBI" id="CHEBI:30616"/>
    </ligand>
</feature>
<keyword id="KW-0066">ATP synthesis</keyword>
<keyword id="KW-0067">ATP-binding</keyword>
<keyword id="KW-0375">Hydrogen ion transport</keyword>
<keyword id="KW-0406">Ion transport</keyword>
<keyword id="KW-0547">Nucleotide-binding</keyword>
<keyword id="KW-1278">Translocase</keyword>
<keyword id="KW-0813">Transport</keyword>
<dbReference type="EC" id="7.1.2.2"/>
<dbReference type="EMBL" id="AE001363">
    <property type="protein sequence ID" value="AAD18241.1"/>
    <property type="molecule type" value="Genomic_DNA"/>
</dbReference>
<dbReference type="EMBL" id="AE002161">
    <property type="protein sequence ID" value="AAF38495.1"/>
    <property type="molecule type" value="Genomic_DNA"/>
</dbReference>
<dbReference type="EMBL" id="BA000008">
    <property type="protein sequence ID" value="BAA98298.1"/>
    <property type="molecule type" value="Genomic_DNA"/>
</dbReference>
<dbReference type="EMBL" id="AE009440">
    <property type="protein sequence ID" value="AAP98021.1"/>
    <property type="molecule type" value="Genomic_DNA"/>
</dbReference>
<dbReference type="PIR" id="B72121">
    <property type="entry name" value="B72121"/>
</dbReference>
<dbReference type="PIR" id="H86501">
    <property type="entry name" value="H86501"/>
</dbReference>
<dbReference type="RefSeq" id="NP_224296.1">
    <property type="nucleotide sequence ID" value="NC_000922.1"/>
</dbReference>
<dbReference type="RefSeq" id="WP_010882738.1">
    <property type="nucleotide sequence ID" value="NZ_LN847257.1"/>
</dbReference>
<dbReference type="SMR" id="Q9Z993"/>
<dbReference type="STRING" id="406984.CPK_ORF00598"/>
<dbReference type="GeneID" id="45050133"/>
<dbReference type="KEGG" id="cpa:CP_0686"/>
<dbReference type="KEGG" id="cpj:atpA"/>
<dbReference type="KEGG" id="cpn:CPn_0088"/>
<dbReference type="KEGG" id="cpt:CpB0088"/>
<dbReference type="PATRIC" id="fig|115713.3.peg.101"/>
<dbReference type="eggNOG" id="COG1155">
    <property type="taxonomic scope" value="Bacteria"/>
</dbReference>
<dbReference type="HOGENOM" id="CLU_008162_1_1_0"/>
<dbReference type="OrthoDB" id="9803053at2"/>
<dbReference type="Proteomes" id="UP000000583">
    <property type="component" value="Chromosome"/>
</dbReference>
<dbReference type="Proteomes" id="UP000000801">
    <property type="component" value="Chromosome"/>
</dbReference>
<dbReference type="GO" id="GO:0005524">
    <property type="term" value="F:ATP binding"/>
    <property type="evidence" value="ECO:0007669"/>
    <property type="project" value="UniProtKB-UniRule"/>
</dbReference>
<dbReference type="GO" id="GO:0046933">
    <property type="term" value="F:proton-transporting ATP synthase activity, rotational mechanism"/>
    <property type="evidence" value="ECO:0007669"/>
    <property type="project" value="UniProtKB-UniRule"/>
</dbReference>
<dbReference type="GO" id="GO:0046961">
    <property type="term" value="F:proton-transporting ATPase activity, rotational mechanism"/>
    <property type="evidence" value="ECO:0007669"/>
    <property type="project" value="InterPro"/>
</dbReference>
<dbReference type="GO" id="GO:0042777">
    <property type="term" value="P:proton motive force-driven plasma membrane ATP synthesis"/>
    <property type="evidence" value="ECO:0007669"/>
    <property type="project" value="UniProtKB-UniRule"/>
</dbReference>
<dbReference type="CDD" id="cd01426">
    <property type="entry name" value="ATP-synt_F1_V1_A1_AB_FliI_N"/>
    <property type="match status" value="1"/>
</dbReference>
<dbReference type="CDD" id="cd18111">
    <property type="entry name" value="ATP-synt_V_A-type_alpha_C"/>
    <property type="match status" value="1"/>
</dbReference>
<dbReference type="CDD" id="cd01134">
    <property type="entry name" value="V_A-ATPase_A"/>
    <property type="match status" value="1"/>
</dbReference>
<dbReference type="FunFam" id="3.40.50.300:FF:000675">
    <property type="entry name" value="V-type ATP synthase alpha chain"/>
    <property type="match status" value="1"/>
</dbReference>
<dbReference type="Gene3D" id="2.30.30.650">
    <property type="match status" value="1"/>
</dbReference>
<dbReference type="Gene3D" id="2.40.50.100">
    <property type="match status" value="1"/>
</dbReference>
<dbReference type="Gene3D" id="1.10.1140.10">
    <property type="entry name" value="Bovine Mitochondrial F1-atpase, Atp Synthase Beta Chain, Chain D, domain 3"/>
    <property type="match status" value="1"/>
</dbReference>
<dbReference type="Gene3D" id="3.40.50.300">
    <property type="entry name" value="P-loop containing nucleotide triphosphate hydrolases"/>
    <property type="match status" value="1"/>
</dbReference>
<dbReference type="HAMAP" id="MF_00309">
    <property type="entry name" value="ATP_synth_A_arch"/>
    <property type="match status" value="1"/>
</dbReference>
<dbReference type="InterPro" id="IPR055190">
    <property type="entry name" value="ATP-synt_VA_C"/>
</dbReference>
<dbReference type="InterPro" id="IPR031686">
    <property type="entry name" value="ATP-synth_a_Xtn"/>
</dbReference>
<dbReference type="InterPro" id="IPR020003">
    <property type="entry name" value="ATPase_a/bsu_AS"/>
</dbReference>
<dbReference type="InterPro" id="IPR004100">
    <property type="entry name" value="ATPase_F1/V1/A1_a/bsu_N"/>
</dbReference>
<dbReference type="InterPro" id="IPR000194">
    <property type="entry name" value="ATPase_F1/V1/A1_a/bsu_nucl-bd"/>
</dbReference>
<dbReference type="InterPro" id="IPR024034">
    <property type="entry name" value="ATPase_F1/V1_b/a_C"/>
</dbReference>
<dbReference type="InterPro" id="IPR027417">
    <property type="entry name" value="P-loop_NTPase"/>
</dbReference>
<dbReference type="InterPro" id="IPR022878">
    <property type="entry name" value="V-ATPase_asu"/>
</dbReference>
<dbReference type="NCBIfam" id="NF003220">
    <property type="entry name" value="PRK04192.1"/>
    <property type="match status" value="1"/>
</dbReference>
<dbReference type="PANTHER" id="PTHR43607:SF1">
    <property type="entry name" value="H(+)-TRANSPORTING TWO-SECTOR ATPASE"/>
    <property type="match status" value="1"/>
</dbReference>
<dbReference type="PANTHER" id="PTHR43607">
    <property type="entry name" value="V-TYPE PROTON ATPASE CATALYTIC SUBUNIT A"/>
    <property type="match status" value="1"/>
</dbReference>
<dbReference type="Pfam" id="PF00006">
    <property type="entry name" value="ATP-synt_ab"/>
    <property type="match status" value="1"/>
</dbReference>
<dbReference type="Pfam" id="PF02874">
    <property type="entry name" value="ATP-synt_ab_N"/>
    <property type="match status" value="1"/>
</dbReference>
<dbReference type="Pfam" id="PF16886">
    <property type="entry name" value="ATP-synt_ab_Xtn"/>
    <property type="match status" value="1"/>
</dbReference>
<dbReference type="Pfam" id="PF22919">
    <property type="entry name" value="ATP-synt_VA_C"/>
    <property type="match status" value="1"/>
</dbReference>
<dbReference type="SUPFAM" id="SSF47917">
    <property type="entry name" value="C-terminal domain of alpha and beta subunits of F1 ATP synthase"/>
    <property type="match status" value="1"/>
</dbReference>
<dbReference type="SUPFAM" id="SSF52540">
    <property type="entry name" value="P-loop containing nucleoside triphosphate hydrolases"/>
    <property type="match status" value="1"/>
</dbReference>
<dbReference type="PROSITE" id="PS00152">
    <property type="entry name" value="ATPASE_ALPHA_BETA"/>
    <property type="match status" value="1"/>
</dbReference>
<organism>
    <name type="scientific">Chlamydia pneumoniae</name>
    <name type="common">Chlamydophila pneumoniae</name>
    <dbReference type="NCBI Taxonomy" id="83558"/>
    <lineage>
        <taxon>Bacteria</taxon>
        <taxon>Pseudomonadati</taxon>
        <taxon>Chlamydiota</taxon>
        <taxon>Chlamydiia</taxon>
        <taxon>Chlamydiales</taxon>
        <taxon>Chlamydiaceae</taxon>
        <taxon>Chlamydia/Chlamydophila group</taxon>
        <taxon>Chlamydia</taxon>
    </lineage>
</organism>
<protein>
    <recommendedName>
        <fullName>V-type ATP synthase alpha chain</fullName>
        <ecNumber>7.1.2.2</ecNumber>
    </recommendedName>
    <alternativeName>
        <fullName>V-ATPase subunit A</fullName>
    </alternativeName>
</protein>
<accession>Q9Z993</accession>
<sequence length="591" mass="65360">MVTVSEQTAQGHVIEAYGNLLRVRFDGYVRQGEVAYVNVDNTWLKAEVIEVADQEVKVQVFEDTQGACRGALVTFSGHLLEAELGPGLLQGIFDGLQNRLEVLAEDSSFLQRGKHVNAISDHNLWNYTPVASVGDTLRRGDLLGTVPEGRFTHKIMVPFSCFQEVTLTWVISEGTYNAHTVVAKARDAQGKECAFTMVQRWPIKQAFIEGEKIPAHKIMDVGLRILDTQIPVLKGGTFCTPGPFGAGKTVLQHHLSKYAAVDIVILCACGERAGEVVEVLQEFPHLIDPHTGKSLMHRTCIICNTSSMPVAARESSIYLGVTIAEYYRQMGLDILLLADSTSRWAQALREISGRLEEIPGEEAFPAYLSSRIAAFYERGGAITTKDGSEGSLTICGAVSPAGGNFEEPVTQSTLAVVGAFCGLSKARADARRYPSIDPLISWSKYLNQVGQILEEKVSGWGGAVKKAAQFLEKGSEIGKRMEVVGEEGVSMEDMEIYLKAELYDFCYLQQNAFDPVDCYCPFERQIELFSLISRIFDAKFVFDSPDDARSFFLELQSKIKTLNGLKFLSEEYHESKEVIVRLLEKTMVQMA</sequence>
<reference key="1">
    <citation type="journal article" date="1999" name="Nat. Genet.">
        <title>Comparative genomes of Chlamydia pneumoniae and C. trachomatis.</title>
        <authorList>
            <person name="Kalman S."/>
            <person name="Mitchell W.P."/>
            <person name="Marathe R."/>
            <person name="Lammel C.J."/>
            <person name="Fan J."/>
            <person name="Hyman R.W."/>
            <person name="Olinger L."/>
            <person name="Grimwood J."/>
            <person name="Davis R.W."/>
            <person name="Stephens R.S."/>
        </authorList>
    </citation>
    <scope>NUCLEOTIDE SEQUENCE [LARGE SCALE GENOMIC DNA]</scope>
    <source>
        <strain>CWL029</strain>
    </source>
</reference>
<reference key="2">
    <citation type="journal article" date="2000" name="Nucleic Acids Res.">
        <title>Genome sequences of Chlamydia trachomatis MoPn and Chlamydia pneumoniae AR39.</title>
        <authorList>
            <person name="Read T.D."/>
            <person name="Brunham R.C."/>
            <person name="Shen C."/>
            <person name="Gill S.R."/>
            <person name="Heidelberg J.F."/>
            <person name="White O."/>
            <person name="Hickey E.K."/>
            <person name="Peterson J.D."/>
            <person name="Utterback T.R."/>
            <person name="Berry K.J."/>
            <person name="Bass S."/>
            <person name="Linher K.D."/>
            <person name="Weidman J.F."/>
            <person name="Khouri H.M."/>
            <person name="Craven B."/>
            <person name="Bowman C."/>
            <person name="Dodson R.J."/>
            <person name="Gwinn M.L."/>
            <person name="Nelson W.C."/>
            <person name="DeBoy R.T."/>
            <person name="Kolonay J.F."/>
            <person name="McClarty G."/>
            <person name="Salzberg S.L."/>
            <person name="Eisen J.A."/>
            <person name="Fraser C.M."/>
        </authorList>
    </citation>
    <scope>NUCLEOTIDE SEQUENCE [LARGE SCALE GENOMIC DNA]</scope>
    <source>
        <strain>AR39</strain>
    </source>
</reference>
<reference key="3">
    <citation type="journal article" date="2000" name="Nucleic Acids Res.">
        <title>Comparison of whole genome sequences of Chlamydia pneumoniae J138 from Japan and CWL029 from USA.</title>
        <authorList>
            <person name="Shirai M."/>
            <person name="Hirakawa H."/>
            <person name="Kimoto M."/>
            <person name="Tabuchi M."/>
            <person name="Kishi F."/>
            <person name="Ouchi K."/>
            <person name="Shiba T."/>
            <person name="Ishii K."/>
            <person name="Hattori M."/>
            <person name="Kuhara S."/>
            <person name="Nakazawa T."/>
        </authorList>
    </citation>
    <scope>NUCLEOTIDE SEQUENCE [LARGE SCALE GENOMIC DNA]</scope>
    <source>
        <strain>J138</strain>
    </source>
</reference>
<reference key="4">
    <citation type="submission" date="2002-05" db="EMBL/GenBank/DDBJ databases">
        <title>The genome sequence of Chlamydia pneumoniae TW183 and comparison with other Chlamydia strains based on whole genome sequence analysis.</title>
        <authorList>
            <person name="Geng M.M."/>
            <person name="Schuhmacher A."/>
            <person name="Muehldorfer I."/>
            <person name="Bensch K.W."/>
            <person name="Schaefer K.P."/>
            <person name="Schneider S."/>
            <person name="Pohl T."/>
            <person name="Essig A."/>
            <person name="Marre R."/>
            <person name="Melchers K."/>
        </authorList>
    </citation>
    <scope>NUCLEOTIDE SEQUENCE [LARGE SCALE GENOMIC DNA]</scope>
    <source>
        <strain>TW-183</strain>
    </source>
</reference>
<name>VATA_CHLPN</name>
<proteinExistence type="inferred from homology"/>